<reference key="1">
    <citation type="journal article" date="2007" name="Science">
        <title>The Fusarium graminearum genome reveals a link between localized polymorphism and pathogen specialization.</title>
        <authorList>
            <person name="Cuomo C.A."/>
            <person name="Gueldener U."/>
            <person name="Xu J.-R."/>
            <person name="Trail F."/>
            <person name="Turgeon B.G."/>
            <person name="Di Pietro A."/>
            <person name="Walton J.D."/>
            <person name="Ma L.-J."/>
            <person name="Baker S.E."/>
            <person name="Rep M."/>
            <person name="Adam G."/>
            <person name="Antoniw J."/>
            <person name="Baldwin T."/>
            <person name="Calvo S.E."/>
            <person name="Chang Y.-L."/>
            <person name="DeCaprio D."/>
            <person name="Gale L.R."/>
            <person name="Gnerre S."/>
            <person name="Goswami R.S."/>
            <person name="Hammond-Kosack K."/>
            <person name="Harris L.J."/>
            <person name="Hilburn K."/>
            <person name="Kennell J.C."/>
            <person name="Kroken S."/>
            <person name="Magnuson J.K."/>
            <person name="Mannhaupt G."/>
            <person name="Mauceli E.W."/>
            <person name="Mewes H.-W."/>
            <person name="Mitterbauer R."/>
            <person name="Muehlbauer G."/>
            <person name="Muensterkoetter M."/>
            <person name="Nelson D."/>
            <person name="O'Donnell K."/>
            <person name="Ouellet T."/>
            <person name="Qi W."/>
            <person name="Quesneville H."/>
            <person name="Roncero M.I.G."/>
            <person name="Seong K.-Y."/>
            <person name="Tetko I.V."/>
            <person name="Urban M."/>
            <person name="Waalwijk C."/>
            <person name="Ward T.J."/>
            <person name="Yao J."/>
            <person name="Birren B.W."/>
            <person name="Kistler H.C."/>
        </authorList>
    </citation>
    <scope>NUCLEOTIDE SEQUENCE [LARGE SCALE GENOMIC DNA]</scope>
    <source>
        <strain>ATCC MYA-4620 / CBS 123657 / FGSC 9075 / NRRL 31084 / PH-1</strain>
    </source>
</reference>
<reference key="2">
    <citation type="journal article" date="2010" name="Nature">
        <title>Comparative genomics reveals mobile pathogenicity chromosomes in Fusarium.</title>
        <authorList>
            <person name="Ma L.-J."/>
            <person name="van der Does H.C."/>
            <person name="Borkovich K.A."/>
            <person name="Coleman J.J."/>
            <person name="Daboussi M.-J."/>
            <person name="Di Pietro A."/>
            <person name="Dufresne M."/>
            <person name="Freitag M."/>
            <person name="Grabherr M."/>
            <person name="Henrissat B."/>
            <person name="Houterman P.M."/>
            <person name="Kang S."/>
            <person name="Shim W.-B."/>
            <person name="Woloshuk C."/>
            <person name="Xie X."/>
            <person name="Xu J.-R."/>
            <person name="Antoniw J."/>
            <person name="Baker S.E."/>
            <person name="Bluhm B.H."/>
            <person name="Breakspear A."/>
            <person name="Brown D.W."/>
            <person name="Butchko R.A.E."/>
            <person name="Chapman S."/>
            <person name="Coulson R."/>
            <person name="Coutinho P.M."/>
            <person name="Danchin E.G.J."/>
            <person name="Diener A."/>
            <person name="Gale L.R."/>
            <person name="Gardiner D.M."/>
            <person name="Goff S."/>
            <person name="Hammond-Kosack K.E."/>
            <person name="Hilburn K."/>
            <person name="Hua-Van A."/>
            <person name="Jonkers W."/>
            <person name="Kazan K."/>
            <person name="Kodira C.D."/>
            <person name="Koehrsen M."/>
            <person name="Kumar L."/>
            <person name="Lee Y.-H."/>
            <person name="Li L."/>
            <person name="Manners J.M."/>
            <person name="Miranda-Saavedra D."/>
            <person name="Mukherjee M."/>
            <person name="Park G."/>
            <person name="Park J."/>
            <person name="Park S.-Y."/>
            <person name="Proctor R.H."/>
            <person name="Regev A."/>
            <person name="Ruiz-Roldan M.C."/>
            <person name="Sain D."/>
            <person name="Sakthikumar S."/>
            <person name="Sykes S."/>
            <person name="Schwartz D.C."/>
            <person name="Turgeon B.G."/>
            <person name="Wapinski I."/>
            <person name="Yoder O."/>
            <person name="Young S."/>
            <person name="Zeng Q."/>
            <person name="Zhou S."/>
            <person name="Galagan J."/>
            <person name="Cuomo C.A."/>
            <person name="Kistler H.C."/>
            <person name="Rep M."/>
        </authorList>
    </citation>
    <scope>GENOME REANNOTATION</scope>
    <source>
        <strain>ATCC MYA-4620 / CBS 123657 / FGSC 9075 / NRRL 31084 / PH-1</strain>
    </source>
</reference>
<reference key="3">
    <citation type="journal article" date="2015" name="BMC Genomics">
        <title>The completed genome sequence of the pathogenic ascomycete fungus Fusarium graminearum.</title>
        <authorList>
            <person name="King R."/>
            <person name="Urban M."/>
            <person name="Hammond-Kosack M.C.U."/>
            <person name="Hassani-Pak K."/>
            <person name="Hammond-Kosack K.E."/>
        </authorList>
    </citation>
    <scope>NUCLEOTIDE SEQUENCE [LARGE SCALE GENOMIC DNA]</scope>
    <source>
        <strain>ATCC MYA-4620 / CBS 123657 / FGSC 9075 / NRRL 31084 / PH-1</strain>
    </source>
</reference>
<reference key="4">
    <citation type="journal article" date="2006" name="Plant Cell">
        <title>NPS6, encoding a nonribosomal peptide synthetase involved in siderophore-mediated iron metabolism, is a conserved virulence determinant of plant pathogenic ascomycetes.</title>
        <authorList>
            <person name="Oide S."/>
            <person name="Moeder W."/>
            <person name="Krasnoff S."/>
            <person name="Gibson D."/>
            <person name="Haas H."/>
            <person name="Yoshioka K."/>
            <person name="Turgeon B.G."/>
        </authorList>
    </citation>
    <scope>FUNCTION</scope>
</reference>
<reference key="5">
    <citation type="journal article" date="2007" name="Curr. Genet.">
        <title>Nonribosomal peptide synthetase (NPS) genes in Fusarium graminearum, F. culmorum and F. pseudograminearium and identification of NPS2 as the producer of ferricrocin.</title>
        <authorList>
            <person name="Tobiasen C."/>
            <person name="Aahman J."/>
            <person name="Ravnholt K.S."/>
            <person name="Bjerrum M.J."/>
            <person name="Grell M.N."/>
            <person name="Giese H."/>
        </authorList>
    </citation>
    <scope>FUNCTION</scope>
</reference>
<reference key="6">
    <citation type="journal article" date="2007" name="Eukaryot. Cell">
        <title>Intracellular siderophores are essential for ascomycete sexual development in heterothallic Cochliobolus heterostrophus and homothallic Gibberella zeae.</title>
        <authorList>
            <person name="Oide S."/>
            <person name="Krasnoff S.B."/>
            <person name="Gibson D.M."/>
            <person name="Turgeon B.G."/>
        </authorList>
    </citation>
    <scope>FUNCTION</scope>
</reference>
<reference key="7">
    <citation type="journal article" date="2007" name="Mol. Plant Pathol.">
        <title>The siderophore biosynthetic gene SID1, but not the ferroxidase gene FET3, is required for full Fusarium graminearum virulence.</title>
        <authorList>
            <person name="Greenshields D.L."/>
            <person name="Liu G."/>
            <person name="Feng J."/>
            <person name="Selvaraj G."/>
            <person name="Wei Y."/>
        </authorList>
    </citation>
    <scope>FUNCTION</scope>
    <scope>INDUCTION</scope>
</reference>
<feature type="chain" id="PRO_0000444439" description="MFS siderochrome iron transporter 1">
    <location>
        <begin position="1"/>
        <end position="609"/>
    </location>
</feature>
<feature type="transmembrane region" description="Helical" evidence="1">
    <location>
        <begin position="81"/>
        <end position="101"/>
    </location>
</feature>
<feature type="transmembrane region" description="Helical" evidence="1">
    <location>
        <begin position="125"/>
        <end position="145"/>
    </location>
</feature>
<feature type="transmembrane region" description="Helical" evidence="1">
    <location>
        <begin position="154"/>
        <end position="174"/>
    </location>
</feature>
<feature type="transmembrane region" description="Helical" evidence="1">
    <location>
        <begin position="182"/>
        <end position="202"/>
    </location>
</feature>
<feature type="transmembrane region" description="Helical" evidence="1">
    <location>
        <begin position="220"/>
        <end position="240"/>
    </location>
</feature>
<feature type="transmembrane region" description="Helical" evidence="1">
    <location>
        <begin position="245"/>
        <end position="265"/>
    </location>
</feature>
<feature type="transmembrane region" description="Helical" evidence="1">
    <location>
        <begin position="300"/>
        <end position="320"/>
    </location>
</feature>
<feature type="transmembrane region" description="Helical" evidence="1">
    <location>
        <begin position="329"/>
        <end position="349"/>
    </location>
</feature>
<feature type="transmembrane region" description="Helical" evidence="1">
    <location>
        <begin position="368"/>
        <end position="390"/>
    </location>
</feature>
<feature type="transmembrane region" description="Helical" evidence="1">
    <location>
        <begin position="407"/>
        <end position="427"/>
    </location>
</feature>
<feature type="transmembrane region" description="Helical" evidence="1">
    <location>
        <begin position="432"/>
        <end position="452"/>
    </location>
</feature>
<feature type="transmembrane region" description="Helical" evidence="1">
    <location>
        <begin position="469"/>
        <end position="489"/>
    </location>
</feature>
<feature type="transmembrane region" description="Helical" evidence="1">
    <location>
        <begin position="496"/>
        <end position="516"/>
    </location>
</feature>
<feature type="transmembrane region" description="Helical" evidence="1">
    <location>
        <begin position="573"/>
        <end position="593"/>
    </location>
</feature>
<feature type="region of interest" description="Disordered" evidence="2">
    <location>
        <begin position="1"/>
        <end position="69"/>
    </location>
</feature>
<feature type="compositionally biased region" description="Basic and acidic residues" evidence="2">
    <location>
        <begin position="1"/>
        <end position="17"/>
    </location>
</feature>
<feature type="compositionally biased region" description="Basic and acidic residues" evidence="2">
    <location>
        <begin position="25"/>
        <end position="34"/>
    </location>
</feature>
<comment type="function">
    <text evidence="3 4 5 6">Major facilitator transporter involved in extracellular siderophore uptake (PubMed:20507510). Gibberella zeae produces extracellular coprogen-type siderophores as well as the intracellular siderophore ferricrocin (PubMed:17056706). The role of extracellular siderophores is to supply iron to the fungus during plant infection, and the intracellular ferricrocin is required for intracellular iron distribution and storage with a crucial role in ascus and ascospore development (PubMed:17043871, PubMed:17056706, PubMed:17601875).</text>
</comment>
<comment type="subcellular location">
    <subcellularLocation>
        <location evidence="8">Cell membrane</location>
        <topology evidence="1">Multi-pass membrane protein</topology>
    </subcellularLocation>
</comment>
<comment type="induction">
    <text evidence="6">Not expressed during infection (PubMed:20507510).</text>
</comment>
<comment type="similarity">
    <text evidence="8">Belongs to the major facilitator superfamily.</text>
</comment>
<accession>I1RAK8</accession>
<evidence type="ECO:0000255" key="1"/>
<evidence type="ECO:0000256" key="2">
    <source>
        <dbReference type="SAM" id="MobiDB-lite"/>
    </source>
</evidence>
<evidence type="ECO:0000269" key="3">
    <source>
    </source>
</evidence>
<evidence type="ECO:0000269" key="4">
    <source>
    </source>
</evidence>
<evidence type="ECO:0000269" key="5">
    <source>
    </source>
</evidence>
<evidence type="ECO:0000269" key="6">
    <source>
    </source>
</evidence>
<evidence type="ECO:0000303" key="7">
    <source>
    </source>
</evidence>
<evidence type="ECO:0000305" key="8"/>
<name>MIR1_GIBZE</name>
<dbReference type="EMBL" id="HG970332">
    <property type="protein sequence ID" value="CEF72488.1"/>
    <property type="molecule type" value="Genomic_DNA"/>
</dbReference>
<dbReference type="RefSeq" id="XP_011316218.1">
    <property type="nucleotide sequence ID" value="XM_011317916.1"/>
</dbReference>
<dbReference type="SMR" id="I1RAK8"/>
<dbReference type="KEGG" id="fgr:FGSG_00539"/>
<dbReference type="VEuPathDB" id="FungiDB:FGRAMPH1_01G01375"/>
<dbReference type="eggNOG" id="KOG0254">
    <property type="taxonomic scope" value="Eukaryota"/>
</dbReference>
<dbReference type="HOGENOM" id="CLU_012970_1_0_1"/>
<dbReference type="InParanoid" id="I1RAK8"/>
<dbReference type="OrthoDB" id="107237at110618"/>
<dbReference type="Proteomes" id="UP000070720">
    <property type="component" value="Chromosome 1"/>
</dbReference>
<dbReference type="GO" id="GO:0005886">
    <property type="term" value="C:plasma membrane"/>
    <property type="evidence" value="ECO:0007669"/>
    <property type="project" value="UniProtKB-SubCell"/>
</dbReference>
<dbReference type="GO" id="GO:0022857">
    <property type="term" value="F:transmembrane transporter activity"/>
    <property type="evidence" value="ECO:0007669"/>
    <property type="project" value="InterPro"/>
</dbReference>
<dbReference type="GO" id="GO:0006826">
    <property type="term" value="P:iron ion transport"/>
    <property type="evidence" value="ECO:0007669"/>
    <property type="project" value="UniProtKB-KW"/>
</dbReference>
<dbReference type="FunFam" id="1.20.1250.20:FF:000302">
    <property type="entry name" value="MFS siderochrome iron transporter MirB"/>
    <property type="match status" value="1"/>
</dbReference>
<dbReference type="FunFam" id="1.20.1250.20:FF:000284">
    <property type="entry name" value="Siderophore iron transporter mirB"/>
    <property type="match status" value="1"/>
</dbReference>
<dbReference type="Gene3D" id="1.20.1250.20">
    <property type="entry name" value="MFS general substrate transporter like domains"/>
    <property type="match status" value="2"/>
</dbReference>
<dbReference type="InterPro" id="IPR020846">
    <property type="entry name" value="MFS_dom"/>
</dbReference>
<dbReference type="InterPro" id="IPR036259">
    <property type="entry name" value="MFS_trans_sf"/>
</dbReference>
<dbReference type="PANTHER" id="PTHR23501">
    <property type="entry name" value="MAJOR FACILITATOR SUPERFAMILY"/>
    <property type="match status" value="1"/>
</dbReference>
<dbReference type="PANTHER" id="PTHR23501:SF50">
    <property type="entry name" value="MFS SIDEROCHROME IRON TRANSPORTER MIRB (AFU_ORTHOLOGUE AFUA_3G03640)-RELATED"/>
    <property type="match status" value="1"/>
</dbReference>
<dbReference type="SUPFAM" id="SSF103473">
    <property type="entry name" value="MFS general substrate transporter"/>
    <property type="match status" value="2"/>
</dbReference>
<dbReference type="PROSITE" id="PS50850">
    <property type="entry name" value="MFS"/>
    <property type="match status" value="1"/>
</dbReference>
<keyword id="KW-1003">Cell membrane</keyword>
<keyword id="KW-0406">Ion transport</keyword>
<keyword id="KW-0408">Iron</keyword>
<keyword id="KW-0410">Iron transport</keyword>
<keyword id="KW-0472">Membrane</keyword>
<keyword id="KW-1185">Reference proteome</keyword>
<keyword id="KW-0812">Transmembrane</keyword>
<keyword id="KW-1133">Transmembrane helix</keyword>
<keyword id="KW-0813">Transport</keyword>
<proteinExistence type="evidence at transcript level"/>
<sequence>MSALTKIREGLAREDNTHVAGTLAPHEKEIHETPEVVSEVGPDHDKEATAGAINPDDKGNDSDVPSEDVQNGVKEIQAITLTWGKGSLAALLCLIWTLFLISGFRGSFYLVLVPYVTSEWSAHSLMTTIPIVSDAMTAACYIPMAKALDVWGRAEGFLLMSGFATLGLILMAVSQNLATFCAAQVFYSVGWGGMIYAVGVLAADASNLRNRGLAFAFTSSPYMITAFAGSKAAAAFVIDVKNWRWGFGWIALVLPCVTIPLFLVLKVNLRKAFKNGTVTKTTRNRGFFGSIWWAFNEFDVIGIFLFGGGLVVFLLPFNLAGHAPNGWSTGYIIAMIIVGFCTLIFFGVWEYWLAPVPFLQGRFLLDRSVVAACMIDLTYQVSYYTWNYFFTSFLQVVVNLGPAEAGYVNSTFQVVSGVLLFIVGFLIRKTGFYKWTFYFAVPIYIFALGLMIHFRAPNQYVGYIIMCEIFISIGGAVFILVMQLAVLAAVAHQYVAAALATLYVAGGVGGAVGGAISGAIWTNSFIPQLIKRLPESEVANATLIAGSIVNQLAYPVDSPARLAIQESYGFAQIRMLAAGVGIASLFFIWVPMLRNIDVKKLKQTKGLVL</sequence>
<protein>
    <recommendedName>
        <fullName evidence="7">MFS siderochrome iron transporter 1</fullName>
    </recommendedName>
</protein>
<gene>
    <name evidence="7" type="primary">MIR1</name>
    <name type="ORF">FG00539</name>
    <name type="ORF">FGRAMPH1_01T01375</name>
</gene>
<organism>
    <name type="scientific">Gibberella zeae (strain ATCC MYA-4620 / CBS 123657 / FGSC 9075 / NRRL 31084 / PH-1)</name>
    <name type="common">Wheat head blight fungus</name>
    <name type="synonym">Fusarium graminearum</name>
    <dbReference type="NCBI Taxonomy" id="229533"/>
    <lineage>
        <taxon>Eukaryota</taxon>
        <taxon>Fungi</taxon>
        <taxon>Dikarya</taxon>
        <taxon>Ascomycota</taxon>
        <taxon>Pezizomycotina</taxon>
        <taxon>Sordariomycetes</taxon>
        <taxon>Hypocreomycetidae</taxon>
        <taxon>Hypocreales</taxon>
        <taxon>Nectriaceae</taxon>
        <taxon>Fusarium</taxon>
    </lineage>
</organism>